<comment type="function">
    <text evidence="1 2">Class II ribonuclease (RNase) (By similarity). Binds to cytokinins (By similarity). Interacts with melatonin (By similarity).</text>
</comment>
<comment type="subcellular location">
    <subcellularLocation>
        <location evidence="2">Cytoplasm</location>
        <location evidence="2">Cytosol</location>
    </subcellularLocation>
</comment>
<comment type="allergen">
    <text evidence="4">Causes an allergic reaction in human.</text>
</comment>
<comment type="similarity">
    <text evidence="4">Belongs to the BetVI family.</text>
</comment>
<gene>
    <name evidence="3" type="primary">PR10.2D</name>
</gene>
<protein>
    <recommendedName>
        <fullName evidence="3">Class 10 plant pathogenesis-related protein 2D</fullName>
        <shortName evidence="3">Llpr10.2d</shortName>
        <shortName evidence="3">Ypr-10.2d</shortName>
        <ecNumber evidence="1">3.1.27.-</ecNumber>
    </recommendedName>
    <allergenName evidence="4">Lup l 4</allergenName>
</protein>
<organism>
    <name type="scientific">Lupinus luteus</name>
    <name type="common">European yellow lupine</name>
    <dbReference type="NCBI Taxonomy" id="3873"/>
    <lineage>
        <taxon>Eukaryota</taxon>
        <taxon>Viridiplantae</taxon>
        <taxon>Streptophyta</taxon>
        <taxon>Embryophyta</taxon>
        <taxon>Tracheophyta</taxon>
        <taxon>Spermatophyta</taxon>
        <taxon>Magnoliopsida</taxon>
        <taxon>eudicotyledons</taxon>
        <taxon>Gunneridae</taxon>
        <taxon>Pentapetalae</taxon>
        <taxon>rosids</taxon>
        <taxon>fabids</taxon>
        <taxon>Fabales</taxon>
        <taxon>Fabaceae</taxon>
        <taxon>Papilionoideae</taxon>
        <taxon>50 kb inversion clade</taxon>
        <taxon>genistoids sensu lato</taxon>
        <taxon>core genistoids</taxon>
        <taxon>Genisteae</taxon>
        <taxon>Lupinus</taxon>
    </lineage>
</organism>
<reference key="1">
    <citation type="submission" date="2000-11" db="EMBL/GenBank/DDBJ databases">
        <title>Structure of Lupinus luteus cDNA encoding PR10.2D protein.</title>
        <authorList>
            <person name="Handschuh L.A."/>
            <person name="Sikorski M.M."/>
        </authorList>
    </citation>
    <scope>NUCLEOTIDE SEQUENCE [MRNA]</scope>
</reference>
<sequence>MGVFTFEDESTSTIAPARLYKALVKDADAIIPKAVEAIQSIETVEGNGGPGTIKKLTLIEGGETKYVLHKIEAVDEANLGYNYSIVGGVGLPDTIEKISFETKLVEGANGGSIGKVTIKIETKGDAQPNEEEGKAAKARGDAFFKAIENYLSAHPEYN</sequence>
<feature type="chain" id="PRO_0000445932" description="Class 10 plant pathogenesis-related protein 2D">
    <location>
        <begin position="1"/>
        <end position="158"/>
    </location>
</feature>
<feature type="binding site" evidence="2">
    <location>
        <position position="8"/>
    </location>
    <ligand>
        <name>trans-zeatin</name>
        <dbReference type="ChEBI" id="CHEBI:16522"/>
        <label>1</label>
    </ligand>
</feature>
<feature type="binding site" evidence="2">
    <location>
        <position position="32"/>
    </location>
    <ligand>
        <name>Ca(2+)</name>
        <dbReference type="ChEBI" id="CHEBI:29108"/>
    </ligand>
</feature>
<feature type="binding site" evidence="2">
    <location>
        <position position="35"/>
    </location>
    <ligand>
        <name>Ca(2+)</name>
        <dbReference type="ChEBI" id="CHEBI:29108"/>
    </ligand>
</feature>
<feature type="binding site" evidence="2">
    <location>
        <position position="38"/>
    </location>
    <ligand>
        <name>Ca(2+)</name>
        <dbReference type="ChEBI" id="CHEBI:29108"/>
    </ligand>
</feature>
<feature type="binding site" evidence="2">
    <location>
        <position position="60"/>
    </location>
    <ligand>
        <name>trans-zeatin</name>
        <dbReference type="ChEBI" id="CHEBI:16522"/>
        <label>2</label>
    </ligand>
</feature>
<feature type="binding site" evidence="2">
    <location>
        <position position="69"/>
    </location>
    <ligand>
        <name>trans-zeatin</name>
        <dbReference type="ChEBI" id="CHEBI:16522"/>
        <label>3</label>
    </ligand>
</feature>
<feature type="binding site" evidence="2">
    <location>
        <position position="81"/>
    </location>
    <ligand>
        <name>trans-zeatin</name>
        <dbReference type="ChEBI" id="CHEBI:16522"/>
        <label>3</label>
    </ligand>
</feature>
<feature type="binding site" evidence="2">
    <location>
        <position position="83"/>
    </location>
    <ligand>
        <name>trans-zeatin</name>
        <dbReference type="ChEBI" id="CHEBI:16522"/>
        <label>1</label>
    </ligand>
</feature>
<keyword id="KW-0020">Allergen</keyword>
<keyword id="KW-0106">Calcium</keyword>
<keyword id="KW-0963">Cytoplasm</keyword>
<keyword id="KW-0378">Hydrolase</keyword>
<keyword id="KW-0479">Metal-binding</keyword>
<keyword id="KW-0540">Nuclease</keyword>
<keyword id="KW-0568">Pathogenesis-related protein</keyword>
<keyword id="KW-0611">Plant defense</keyword>
<name>P102D_LUPLU</name>
<dbReference type="EC" id="3.1.27.-" evidence="1"/>
<dbReference type="EMBL" id="AF322226">
    <property type="protein sequence ID" value="AAK09429.1"/>
    <property type="molecule type" value="mRNA"/>
</dbReference>
<dbReference type="SMR" id="Q9AXK1"/>
<dbReference type="Allergome" id="9727">
    <property type="allergen name" value="Lup l 4"/>
</dbReference>
<dbReference type="GO" id="GO:0005829">
    <property type="term" value="C:cytosol"/>
    <property type="evidence" value="ECO:0007669"/>
    <property type="project" value="UniProtKB-SubCell"/>
</dbReference>
<dbReference type="GO" id="GO:0005634">
    <property type="term" value="C:nucleus"/>
    <property type="evidence" value="ECO:0007669"/>
    <property type="project" value="TreeGrafter"/>
</dbReference>
<dbReference type="GO" id="GO:0010427">
    <property type="term" value="F:abscisic acid binding"/>
    <property type="evidence" value="ECO:0007669"/>
    <property type="project" value="InterPro"/>
</dbReference>
<dbReference type="GO" id="GO:0005509">
    <property type="term" value="F:calcium ion binding"/>
    <property type="evidence" value="ECO:0000250"/>
    <property type="project" value="UniProtKB"/>
</dbReference>
<dbReference type="GO" id="GO:0044373">
    <property type="term" value="F:cytokinin binding"/>
    <property type="evidence" value="ECO:0000250"/>
    <property type="project" value="UniProtKB"/>
</dbReference>
<dbReference type="GO" id="GO:1904408">
    <property type="term" value="F:melatonin binding"/>
    <property type="evidence" value="ECO:0000250"/>
    <property type="project" value="UniProtKB"/>
</dbReference>
<dbReference type="GO" id="GO:0004864">
    <property type="term" value="F:protein phosphatase inhibitor activity"/>
    <property type="evidence" value="ECO:0007669"/>
    <property type="project" value="InterPro"/>
</dbReference>
<dbReference type="GO" id="GO:0004540">
    <property type="term" value="F:RNA nuclease activity"/>
    <property type="evidence" value="ECO:0000250"/>
    <property type="project" value="UniProtKB"/>
</dbReference>
<dbReference type="GO" id="GO:0038023">
    <property type="term" value="F:signaling receptor activity"/>
    <property type="evidence" value="ECO:0007669"/>
    <property type="project" value="InterPro"/>
</dbReference>
<dbReference type="GO" id="GO:0009738">
    <property type="term" value="P:abscisic acid-activated signaling pathway"/>
    <property type="evidence" value="ECO:0007669"/>
    <property type="project" value="InterPro"/>
</dbReference>
<dbReference type="GO" id="GO:0006952">
    <property type="term" value="P:defense response"/>
    <property type="evidence" value="ECO:0007669"/>
    <property type="project" value="UniProtKB-KW"/>
</dbReference>
<dbReference type="CDD" id="cd07816">
    <property type="entry name" value="Bet_v1-like"/>
    <property type="match status" value="1"/>
</dbReference>
<dbReference type="FunFam" id="3.30.530.20:FF:000007">
    <property type="entry name" value="Major pollen allergen Bet v 1-A"/>
    <property type="match status" value="1"/>
</dbReference>
<dbReference type="Gene3D" id="3.30.530.20">
    <property type="match status" value="1"/>
</dbReference>
<dbReference type="InterPro" id="IPR000916">
    <property type="entry name" value="Bet_v_I/MLP"/>
</dbReference>
<dbReference type="InterPro" id="IPR024949">
    <property type="entry name" value="Bet_v_I_allergen"/>
</dbReference>
<dbReference type="InterPro" id="IPR050279">
    <property type="entry name" value="Plant_def-hormone_signal"/>
</dbReference>
<dbReference type="InterPro" id="IPR023393">
    <property type="entry name" value="START-like_dom_sf"/>
</dbReference>
<dbReference type="PANTHER" id="PTHR31213">
    <property type="entry name" value="OS08G0374000 PROTEIN-RELATED"/>
    <property type="match status" value="1"/>
</dbReference>
<dbReference type="PANTHER" id="PTHR31213:SF55">
    <property type="entry name" value="STRESS-INDUCED PROTEIN SAM22"/>
    <property type="match status" value="1"/>
</dbReference>
<dbReference type="Pfam" id="PF00407">
    <property type="entry name" value="Bet_v_1"/>
    <property type="match status" value="1"/>
</dbReference>
<dbReference type="PRINTS" id="PR00634">
    <property type="entry name" value="BETALLERGEN"/>
</dbReference>
<dbReference type="SUPFAM" id="SSF55961">
    <property type="entry name" value="Bet v1-like"/>
    <property type="match status" value="1"/>
</dbReference>
<evidence type="ECO:0000250" key="1">
    <source>
        <dbReference type="UniProtKB" id="P52779"/>
    </source>
</evidence>
<evidence type="ECO:0000250" key="2">
    <source>
        <dbReference type="UniProtKB" id="Q9LLQ2"/>
    </source>
</evidence>
<evidence type="ECO:0000303" key="3">
    <source ref="1"/>
</evidence>
<evidence type="ECO:0000305" key="4"/>
<proteinExistence type="evidence at transcript level"/>
<accession>Q9AXK1</accession>